<name>THIM_STAA2</name>
<protein>
    <recommendedName>
        <fullName evidence="1">Hydroxyethylthiazole kinase</fullName>
        <ecNumber evidence="1">2.7.1.50</ecNumber>
    </recommendedName>
    <alternativeName>
        <fullName evidence="1">4-methyl-5-beta-hydroxyethylthiazole kinase</fullName>
        <shortName evidence="1">TH kinase</shortName>
        <shortName evidence="1">Thz kinase</shortName>
    </alternativeName>
</protein>
<accession>A6U3H8</accession>
<dbReference type="EC" id="2.7.1.50" evidence="1"/>
<dbReference type="EMBL" id="CP000736">
    <property type="protein sequence ID" value="ABR52996.1"/>
    <property type="molecule type" value="Genomic_DNA"/>
</dbReference>
<dbReference type="SMR" id="A6U3H8"/>
<dbReference type="KEGG" id="sah:SaurJH1_2167"/>
<dbReference type="HOGENOM" id="CLU_019943_0_2_9"/>
<dbReference type="UniPathway" id="UPA00060">
    <property type="reaction ID" value="UER00139"/>
</dbReference>
<dbReference type="GO" id="GO:0005524">
    <property type="term" value="F:ATP binding"/>
    <property type="evidence" value="ECO:0007669"/>
    <property type="project" value="UniProtKB-UniRule"/>
</dbReference>
<dbReference type="GO" id="GO:0004417">
    <property type="term" value="F:hydroxyethylthiazole kinase activity"/>
    <property type="evidence" value="ECO:0007669"/>
    <property type="project" value="UniProtKB-UniRule"/>
</dbReference>
<dbReference type="GO" id="GO:0000287">
    <property type="term" value="F:magnesium ion binding"/>
    <property type="evidence" value="ECO:0007669"/>
    <property type="project" value="UniProtKB-UniRule"/>
</dbReference>
<dbReference type="GO" id="GO:0009228">
    <property type="term" value="P:thiamine biosynthetic process"/>
    <property type="evidence" value="ECO:0007669"/>
    <property type="project" value="UniProtKB-KW"/>
</dbReference>
<dbReference type="GO" id="GO:0009229">
    <property type="term" value="P:thiamine diphosphate biosynthetic process"/>
    <property type="evidence" value="ECO:0007669"/>
    <property type="project" value="UniProtKB-UniRule"/>
</dbReference>
<dbReference type="CDD" id="cd01170">
    <property type="entry name" value="THZ_kinase"/>
    <property type="match status" value="1"/>
</dbReference>
<dbReference type="Gene3D" id="3.40.1190.20">
    <property type="match status" value="1"/>
</dbReference>
<dbReference type="HAMAP" id="MF_00228">
    <property type="entry name" value="Thz_kinase"/>
    <property type="match status" value="1"/>
</dbReference>
<dbReference type="InterPro" id="IPR000417">
    <property type="entry name" value="Hyethyz_kinase"/>
</dbReference>
<dbReference type="InterPro" id="IPR029056">
    <property type="entry name" value="Ribokinase-like"/>
</dbReference>
<dbReference type="NCBIfam" id="NF006830">
    <property type="entry name" value="PRK09355.1"/>
    <property type="match status" value="1"/>
</dbReference>
<dbReference type="Pfam" id="PF02110">
    <property type="entry name" value="HK"/>
    <property type="match status" value="1"/>
</dbReference>
<dbReference type="PIRSF" id="PIRSF000513">
    <property type="entry name" value="Thz_kinase"/>
    <property type="match status" value="1"/>
</dbReference>
<dbReference type="PRINTS" id="PR01099">
    <property type="entry name" value="HYETHTZKNASE"/>
</dbReference>
<dbReference type="SUPFAM" id="SSF53613">
    <property type="entry name" value="Ribokinase-like"/>
    <property type="match status" value="1"/>
</dbReference>
<reference key="1">
    <citation type="submission" date="2007-06" db="EMBL/GenBank/DDBJ databases">
        <title>Complete sequence of chromosome of Staphylococcus aureus subsp. aureus JH1.</title>
        <authorList>
            <consortium name="US DOE Joint Genome Institute"/>
            <person name="Copeland A."/>
            <person name="Lucas S."/>
            <person name="Lapidus A."/>
            <person name="Barry K."/>
            <person name="Detter J.C."/>
            <person name="Glavina del Rio T."/>
            <person name="Hammon N."/>
            <person name="Israni S."/>
            <person name="Dalin E."/>
            <person name="Tice H."/>
            <person name="Pitluck S."/>
            <person name="Chain P."/>
            <person name="Malfatti S."/>
            <person name="Shin M."/>
            <person name="Vergez L."/>
            <person name="Schmutz J."/>
            <person name="Larimer F."/>
            <person name="Land M."/>
            <person name="Hauser L."/>
            <person name="Kyrpides N."/>
            <person name="Ivanova N."/>
            <person name="Tomasz A."/>
            <person name="Richardson P."/>
        </authorList>
    </citation>
    <scope>NUCLEOTIDE SEQUENCE [LARGE SCALE GENOMIC DNA]</scope>
    <source>
        <strain>JH1</strain>
    </source>
</reference>
<gene>
    <name evidence="1" type="primary">thiM</name>
    <name type="ordered locus">SaurJH1_2167</name>
</gene>
<proteinExistence type="inferred from homology"/>
<keyword id="KW-0067">ATP-binding</keyword>
<keyword id="KW-0418">Kinase</keyword>
<keyword id="KW-0460">Magnesium</keyword>
<keyword id="KW-0479">Metal-binding</keyword>
<keyword id="KW-0547">Nucleotide-binding</keyword>
<keyword id="KW-0784">Thiamine biosynthesis</keyword>
<keyword id="KW-0808">Transferase</keyword>
<feature type="chain" id="PRO_1000078218" description="Hydroxyethylthiazole kinase">
    <location>
        <begin position="1"/>
        <end position="263"/>
    </location>
</feature>
<feature type="binding site" evidence="1">
    <location>
        <position position="39"/>
    </location>
    <ligand>
        <name>substrate</name>
    </ligand>
</feature>
<feature type="binding site" evidence="1">
    <location>
        <position position="115"/>
    </location>
    <ligand>
        <name>ATP</name>
        <dbReference type="ChEBI" id="CHEBI:30616"/>
    </ligand>
</feature>
<feature type="binding site" evidence="1">
    <location>
        <position position="160"/>
    </location>
    <ligand>
        <name>ATP</name>
        <dbReference type="ChEBI" id="CHEBI:30616"/>
    </ligand>
</feature>
<feature type="binding site" evidence="1">
    <location>
        <position position="187"/>
    </location>
    <ligand>
        <name>substrate</name>
    </ligand>
</feature>
<evidence type="ECO:0000255" key="1">
    <source>
        <dbReference type="HAMAP-Rule" id="MF_00228"/>
    </source>
</evidence>
<organism>
    <name type="scientific">Staphylococcus aureus (strain JH1)</name>
    <dbReference type="NCBI Taxonomy" id="359787"/>
    <lineage>
        <taxon>Bacteria</taxon>
        <taxon>Bacillati</taxon>
        <taxon>Bacillota</taxon>
        <taxon>Bacilli</taxon>
        <taxon>Bacillales</taxon>
        <taxon>Staphylococcaceae</taxon>
        <taxon>Staphylococcus</taxon>
    </lineage>
</organism>
<sequence>MNYLNKIRIENPLTICYTNDVVKNFTANGLLSIGASPAMSEAPEEAEEFYKVAQALLINIGTLTAQNEQDIIAIAQTANEAGLPIVFDPVAVGASTYRKQFCKLLLKSAKVSVIKGNASEILALIDDTATMKGTDSDANLDAVAIAKKAYAIYKTAIVITGKEDVIVQDNKAIVLANGSPLLARVTGAGCLLGGVIAGFLFRETEPDIEALIEAVSVFNIAAEVAAENENCGGPGTFSPLLLDTLYHLNETTYQQRIRIQEVE</sequence>
<comment type="function">
    <text evidence="1">Catalyzes the phosphorylation of the hydroxyl group of 4-methyl-5-beta-hydroxyethylthiazole (THZ).</text>
</comment>
<comment type="catalytic activity">
    <reaction evidence="1">
        <text>5-(2-hydroxyethyl)-4-methylthiazole + ATP = 4-methyl-5-(2-phosphooxyethyl)-thiazole + ADP + H(+)</text>
        <dbReference type="Rhea" id="RHEA:24212"/>
        <dbReference type="ChEBI" id="CHEBI:15378"/>
        <dbReference type="ChEBI" id="CHEBI:17957"/>
        <dbReference type="ChEBI" id="CHEBI:30616"/>
        <dbReference type="ChEBI" id="CHEBI:58296"/>
        <dbReference type="ChEBI" id="CHEBI:456216"/>
        <dbReference type="EC" id="2.7.1.50"/>
    </reaction>
</comment>
<comment type="cofactor">
    <cofactor evidence="1">
        <name>Mg(2+)</name>
        <dbReference type="ChEBI" id="CHEBI:18420"/>
    </cofactor>
</comment>
<comment type="pathway">
    <text evidence="1">Cofactor biosynthesis; thiamine diphosphate biosynthesis; 4-methyl-5-(2-phosphoethyl)-thiazole from 5-(2-hydroxyethyl)-4-methylthiazole: step 1/1.</text>
</comment>
<comment type="similarity">
    <text evidence="1">Belongs to the Thz kinase family.</text>
</comment>